<name>DAPB_NATPD</name>
<organism>
    <name type="scientific">Natronomonas pharaonis (strain ATCC 35678 / DSM 2160 / CIP 103997 / JCM 8858 / NBRC 14720 / NCIMB 2260 / Gabara)</name>
    <name type="common">Halobacterium pharaonis</name>
    <dbReference type="NCBI Taxonomy" id="348780"/>
    <lineage>
        <taxon>Archaea</taxon>
        <taxon>Methanobacteriati</taxon>
        <taxon>Methanobacteriota</taxon>
        <taxon>Stenosarchaea group</taxon>
        <taxon>Halobacteria</taxon>
        <taxon>Halobacteriales</taxon>
        <taxon>Haloarculaceae</taxon>
        <taxon>Natronomonas</taxon>
    </lineage>
</organism>
<comment type="function">
    <text evidence="1">Catalyzes the conversion of 4-hydroxy-tetrahydrodipicolinate (HTPA) to tetrahydrodipicolinate.</text>
</comment>
<comment type="catalytic activity">
    <reaction evidence="1">
        <text>(S)-2,3,4,5-tetrahydrodipicolinate + NAD(+) + H2O = (2S,4S)-4-hydroxy-2,3,4,5-tetrahydrodipicolinate + NADH + H(+)</text>
        <dbReference type="Rhea" id="RHEA:35323"/>
        <dbReference type="ChEBI" id="CHEBI:15377"/>
        <dbReference type="ChEBI" id="CHEBI:15378"/>
        <dbReference type="ChEBI" id="CHEBI:16845"/>
        <dbReference type="ChEBI" id="CHEBI:57540"/>
        <dbReference type="ChEBI" id="CHEBI:57945"/>
        <dbReference type="ChEBI" id="CHEBI:67139"/>
        <dbReference type="EC" id="1.17.1.8"/>
    </reaction>
</comment>
<comment type="catalytic activity">
    <reaction evidence="1">
        <text>(S)-2,3,4,5-tetrahydrodipicolinate + NADP(+) + H2O = (2S,4S)-4-hydroxy-2,3,4,5-tetrahydrodipicolinate + NADPH + H(+)</text>
        <dbReference type="Rhea" id="RHEA:35331"/>
        <dbReference type="ChEBI" id="CHEBI:15377"/>
        <dbReference type="ChEBI" id="CHEBI:15378"/>
        <dbReference type="ChEBI" id="CHEBI:16845"/>
        <dbReference type="ChEBI" id="CHEBI:57783"/>
        <dbReference type="ChEBI" id="CHEBI:58349"/>
        <dbReference type="ChEBI" id="CHEBI:67139"/>
        <dbReference type="EC" id="1.17.1.8"/>
    </reaction>
</comment>
<comment type="pathway">
    <text evidence="1">Amino-acid biosynthesis; L-lysine biosynthesis via DAP pathway; (S)-tetrahydrodipicolinate from L-aspartate: step 4/4.</text>
</comment>
<comment type="subcellular location">
    <subcellularLocation>
        <location evidence="1">Cytoplasm</location>
    </subcellularLocation>
</comment>
<comment type="similarity">
    <text evidence="1">Belongs to the DapB family.</text>
</comment>
<comment type="caution">
    <text evidence="2">Was originally thought to be a dihydrodipicolinate reductase (DHDPR), catalyzing the conversion of dihydrodipicolinate to tetrahydrodipicolinate. However, it was shown in E.coli that the substrate of the enzymatic reaction is not dihydrodipicolinate (DHDP) but in fact (2S,4S)-4-hydroxy-2,3,4,5-tetrahydrodipicolinic acid (HTPA), the product released by the DapA-catalyzed reaction.</text>
</comment>
<protein>
    <recommendedName>
        <fullName evidence="1">4-hydroxy-tetrahydrodipicolinate reductase</fullName>
        <shortName evidence="1">HTPA reductase</shortName>
        <ecNumber evidence="1">1.17.1.8</ecNumber>
    </recommendedName>
</protein>
<accession>Q3ISP9</accession>
<feature type="chain" id="PRO_0000228408" description="4-hydroxy-tetrahydrodipicolinate reductase">
    <location>
        <begin position="1"/>
        <end position="246"/>
    </location>
</feature>
<feature type="active site" description="Proton donor/acceptor" evidence="1">
    <location>
        <position position="140"/>
    </location>
</feature>
<feature type="active site" description="Proton donor" evidence="1">
    <location>
        <position position="144"/>
    </location>
</feature>
<feature type="binding site" evidence="1">
    <location>
        <begin position="7"/>
        <end position="12"/>
    </location>
    <ligand>
        <name>NAD(+)</name>
        <dbReference type="ChEBI" id="CHEBI:57540"/>
    </ligand>
</feature>
<feature type="binding site" evidence="1">
    <location>
        <begin position="84"/>
        <end position="86"/>
    </location>
    <ligand>
        <name>NAD(+)</name>
        <dbReference type="ChEBI" id="CHEBI:57540"/>
    </ligand>
</feature>
<feature type="binding site" evidence="1">
    <location>
        <begin position="108"/>
        <end position="111"/>
    </location>
    <ligand>
        <name>NAD(+)</name>
        <dbReference type="ChEBI" id="CHEBI:57540"/>
    </ligand>
</feature>
<feature type="binding site" evidence="1">
    <location>
        <position position="141"/>
    </location>
    <ligand>
        <name>(S)-2,3,4,5-tetrahydrodipicolinate</name>
        <dbReference type="ChEBI" id="CHEBI:16845"/>
    </ligand>
</feature>
<feature type="binding site" evidence="1">
    <location>
        <begin position="150"/>
        <end position="151"/>
    </location>
    <ligand>
        <name>(S)-2,3,4,5-tetrahydrodipicolinate</name>
        <dbReference type="ChEBI" id="CHEBI:16845"/>
    </ligand>
</feature>
<dbReference type="EC" id="1.17.1.8" evidence="1"/>
<dbReference type="EMBL" id="CR936257">
    <property type="protein sequence ID" value="CAI48837.1"/>
    <property type="molecule type" value="Genomic_DNA"/>
</dbReference>
<dbReference type="RefSeq" id="WP_011322471.1">
    <property type="nucleotide sequence ID" value="NC_007426.1"/>
</dbReference>
<dbReference type="SMR" id="Q3ISP9"/>
<dbReference type="STRING" id="348780.NP_1492A"/>
<dbReference type="EnsemblBacteria" id="CAI48837">
    <property type="protein sequence ID" value="CAI48837"/>
    <property type="gene ID" value="NP_1492A"/>
</dbReference>
<dbReference type="GeneID" id="3702657"/>
<dbReference type="KEGG" id="nph:NP_1492A"/>
<dbReference type="eggNOG" id="arCOG04393">
    <property type="taxonomic scope" value="Archaea"/>
</dbReference>
<dbReference type="HOGENOM" id="CLU_047479_2_2_2"/>
<dbReference type="OrthoDB" id="195035at2157"/>
<dbReference type="UniPathway" id="UPA00034">
    <property type="reaction ID" value="UER00018"/>
</dbReference>
<dbReference type="Proteomes" id="UP000002698">
    <property type="component" value="Chromosome"/>
</dbReference>
<dbReference type="GO" id="GO:0005737">
    <property type="term" value="C:cytoplasm"/>
    <property type="evidence" value="ECO:0007669"/>
    <property type="project" value="UniProtKB-SubCell"/>
</dbReference>
<dbReference type="GO" id="GO:0008839">
    <property type="term" value="F:4-hydroxy-tetrahydrodipicolinate reductase"/>
    <property type="evidence" value="ECO:0007669"/>
    <property type="project" value="UniProtKB-EC"/>
</dbReference>
<dbReference type="GO" id="GO:0051287">
    <property type="term" value="F:NAD binding"/>
    <property type="evidence" value="ECO:0007669"/>
    <property type="project" value="UniProtKB-UniRule"/>
</dbReference>
<dbReference type="GO" id="GO:0050661">
    <property type="term" value="F:NADP binding"/>
    <property type="evidence" value="ECO:0007669"/>
    <property type="project" value="UniProtKB-UniRule"/>
</dbReference>
<dbReference type="GO" id="GO:0016726">
    <property type="term" value="F:oxidoreductase activity, acting on CH or CH2 groups, NAD or NADP as acceptor"/>
    <property type="evidence" value="ECO:0007669"/>
    <property type="project" value="UniProtKB-UniRule"/>
</dbReference>
<dbReference type="GO" id="GO:0019877">
    <property type="term" value="P:diaminopimelate biosynthetic process"/>
    <property type="evidence" value="ECO:0007669"/>
    <property type="project" value="UniProtKB-UniRule"/>
</dbReference>
<dbReference type="GO" id="GO:0009089">
    <property type="term" value="P:lysine biosynthetic process via diaminopimelate"/>
    <property type="evidence" value="ECO:0007669"/>
    <property type="project" value="UniProtKB-UniRule"/>
</dbReference>
<dbReference type="CDD" id="cd02274">
    <property type="entry name" value="DHDPR_N"/>
    <property type="match status" value="1"/>
</dbReference>
<dbReference type="Gene3D" id="3.30.360.10">
    <property type="entry name" value="Dihydrodipicolinate Reductase, domain 2"/>
    <property type="match status" value="1"/>
</dbReference>
<dbReference type="Gene3D" id="3.40.50.720">
    <property type="entry name" value="NAD(P)-binding Rossmann-like Domain"/>
    <property type="match status" value="1"/>
</dbReference>
<dbReference type="HAMAP" id="MF_00102">
    <property type="entry name" value="DapB"/>
    <property type="match status" value="1"/>
</dbReference>
<dbReference type="InterPro" id="IPR022663">
    <property type="entry name" value="DapB_C"/>
</dbReference>
<dbReference type="InterPro" id="IPR000846">
    <property type="entry name" value="DapB_N"/>
</dbReference>
<dbReference type="InterPro" id="IPR022664">
    <property type="entry name" value="DapB_N_CS"/>
</dbReference>
<dbReference type="InterPro" id="IPR023940">
    <property type="entry name" value="DHDPR_bac"/>
</dbReference>
<dbReference type="InterPro" id="IPR036291">
    <property type="entry name" value="NAD(P)-bd_dom_sf"/>
</dbReference>
<dbReference type="NCBIfam" id="TIGR00036">
    <property type="entry name" value="dapB"/>
    <property type="match status" value="1"/>
</dbReference>
<dbReference type="PANTHER" id="PTHR20836:SF0">
    <property type="entry name" value="4-HYDROXY-TETRAHYDRODIPICOLINATE REDUCTASE 1, CHLOROPLASTIC-RELATED"/>
    <property type="match status" value="1"/>
</dbReference>
<dbReference type="PANTHER" id="PTHR20836">
    <property type="entry name" value="DIHYDRODIPICOLINATE REDUCTASE"/>
    <property type="match status" value="1"/>
</dbReference>
<dbReference type="Pfam" id="PF05173">
    <property type="entry name" value="DapB_C"/>
    <property type="match status" value="1"/>
</dbReference>
<dbReference type="Pfam" id="PF01113">
    <property type="entry name" value="DapB_N"/>
    <property type="match status" value="1"/>
</dbReference>
<dbReference type="PIRSF" id="PIRSF000161">
    <property type="entry name" value="DHPR"/>
    <property type="match status" value="1"/>
</dbReference>
<dbReference type="SUPFAM" id="SSF55347">
    <property type="entry name" value="Glyceraldehyde-3-phosphate dehydrogenase-like, C-terminal domain"/>
    <property type="match status" value="1"/>
</dbReference>
<dbReference type="SUPFAM" id="SSF51735">
    <property type="entry name" value="NAD(P)-binding Rossmann-fold domains"/>
    <property type="match status" value="1"/>
</dbReference>
<dbReference type="PROSITE" id="PS01298">
    <property type="entry name" value="DAPB"/>
    <property type="match status" value="1"/>
</dbReference>
<evidence type="ECO:0000255" key="1">
    <source>
        <dbReference type="HAMAP-Rule" id="MF_00102"/>
    </source>
</evidence>
<evidence type="ECO:0000305" key="2"/>
<proteinExistence type="inferred from homology"/>
<keyword id="KW-0028">Amino-acid biosynthesis</keyword>
<keyword id="KW-0963">Cytoplasm</keyword>
<keyword id="KW-0220">Diaminopimelate biosynthesis</keyword>
<keyword id="KW-0457">Lysine biosynthesis</keyword>
<keyword id="KW-0520">NAD</keyword>
<keyword id="KW-0521">NADP</keyword>
<keyword id="KW-0560">Oxidoreductase</keyword>
<keyword id="KW-1185">Reference proteome</keyword>
<reference key="1">
    <citation type="journal article" date="2005" name="Genome Res.">
        <title>Living with two extremes: conclusions from the genome sequence of Natronomonas pharaonis.</title>
        <authorList>
            <person name="Falb M."/>
            <person name="Pfeiffer F."/>
            <person name="Palm P."/>
            <person name="Rodewald K."/>
            <person name="Hickmann V."/>
            <person name="Tittor J."/>
            <person name="Oesterhelt D."/>
        </authorList>
    </citation>
    <scope>NUCLEOTIDE SEQUENCE [LARGE SCALE GENOMIC DNA]</scope>
    <source>
        <strain>ATCC 35678 / DSM 2160 / CIP 103997 / JCM 8858 / NBRC 14720 / NCIMB 2260 / Gabara</strain>
    </source>
</reference>
<sequence length="246" mass="26301">MNVVVVGATGRTGSEIVAEASERGHDVSGVARSQTSVGDVRVYPTEEFPELLDNADAVIDFTVPEATREHVQAAAAAGVPYVIGTTGFDDDGMAALRTASESTAVLKASNFARGVQALLRVVEAGVEALPEYDIELTETHHNGKRDAPSGTANTILDVVDETRDEALDRTHGREGEHRRGDDEVGVHVRRAGTVRGEHELLLAGNDEVLSLTHRAESRRVFAAGAVDAAEWLADRSAGWYDFEDTV</sequence>
<gene>
    <name evidence="1" type="primary">dapB</name>
    <name type="ordered locus">NP_1492A</name>
</gene>